<proteinExistence type="inferred from homology"/>
<feature type="chain" id="PRO_1000212361" description="Nucleotide-binding protein EUBREC_0697">
    <location>
        <begin position="1"/>
        <end position="291"/>
    </location>
</feature>
<feature type="binding site" evidence="1">
    <location>
        <begin position="8"/>
        <end position="15"/>
    </location>
    <ligand>
        <name>ATP</name>
        <dbReference type="ChEBI" id="CHEBI:30616"/>
    </ligand>
</feature>
<feature type="binding site" evidence="1">
    <location>
        <begin position="59"/>
        <end position="62"/>
    </location>
    <ligand>
        <name>GTP</name>
        <dbReference type="ChEBI" id="CHEBI:37565"/>
    </ligand>
</feature>
<keyword id="KW-0067">ATP-binding</keyword>
<keyword id="KW-0342">GTP-binding</keyword>
<keyword id="KW-0547">Nucleotide-binding</keyword>
<organism>
    <name type="scientific">Agathobacter rectalis (strain ATCC 33656 / DSM 3377 / JCM 17463 / KCTC 5835 / VPI 0990)</name>
    <name type="common">Eubacterium rectale</name>
    <dbReference type="NCBI Taxonomy" id="515619"/>
    <lineage>
        <taxon>Bacteria</taxon>
        <taxon>Bacillati</taxon>
        <taxon>Bacillota</taxon>
        <taxon>Clostridia</taxon>
        <taxon>Lachnospirales</taxon>
        <taxon>Lachnospiraceae</taxon>
        <taxon>Agathobacter</taxon>
    </lineage>
</organism>
<evidence type="ECO:0000255" key="1">
    <source>
        <dbReference type="HAMAP-Rule" id="MF_00636"/>
    </source>
</evidence>
<sequence>MKFVIVTGMSGAGKSTAMKMMEDMGYFCIDNLPIQLLDKLIDLSNTFHSDVSKVAVGIDVRNGSGIDAIPQTLEQLRQKNFPYEILFLDAEDEVLVKRYKETRRNHPLAGSERINKGIVLEREKLQYLKDNADYIIDTSQLLTRELKIELEKIFVQNEDYKNLFITILSFGFKYGIPSDSDIVMDVRFLPNPYYVDGLRAKTGNDKEIQDYVMQFPEANEFIDKLDDMIKFLIPNYISEGKNQLVISIGCTGGKHRSVTLANELYKRLSGCNDYGLKIEHRDIGKDALRGK</sequence>
<name>Y697_AGARV</name>
<accession>C4ZEG8</accession>
<protein>
    <recommendedName>
        <fullName evidence="1">Nucleotide-binding protein EUBREC_0697</fullName>
    </recommendedName>
</protein>
<dbReference type="EMBL" id="CP001107">
    <property type="protein sequence ID" value="ACR74484.1"/>
    <property type="molecule type" value="Genomic_DNA"/>
</dbReference>
<dbReference type="RefSeq" id="WP_012741600.1">
    <property type="nucleotide sequence ID" value="NC_012781.1"/>
</dbReference>
<dbReference type="SMR" id="C4ZEG8"/>
<dbReference type="STRING" id="515619.EUBREC_0697"/>
<dbReference type="PaxDb" id="515619-EUBREC_0697"/>
<dbReference type="GeneID" id="86987580"/>
<dbReference type="KEGG" id="ere:EUBREC_0697"/>
<dbReference type="HOGENOM" id="CLU_059558_0_0_9"/>
<dbReference type="Proteomes" id="UP000001477">
    <property type="component" value="Chromosome"/>
</dbReference>
<dbReference type="GO" id="GO:0005524">
    <property type="term" value="F:ATP binding"/>
    <property type="evidence" value="ECO:0007669"/>
    <property type="project" value="UniProtKB-UniRule"/>
</dbReference>
<dbReference type="GO" id="GO:0005525">
    <property type="term" value="F:GTP binding"/>
    <property type="evidence" value="ECO:0007669"/>
    <property type="project" value="UniProtKB-UniRule"/>
</dbReference>
<dbReference type="Gene3D" id="3.40.50.300">
    <property type="entry name" value="P-loop containing nucleotide triphosphate hydrolases"/>
    <property type="match status" value="1"/>
</dbReference>
<dbReference type="HAMAP" id="MF_00636">
    <property type="entry name" value="RapZ_like"/>
    <property type="match status" value="1"/>
</dbReference>
<dbReference type="InterPro" id="IPR027417">
    <property type="entry name" value="P-loop_NTPase"/>
</dbReference>
<dbReference type="InterPro" id="IPR005337">
    <property type="entry name" value="RapZ-like"/>
</dbReference>
<dbReference type="InterPro" id="IPR053930">
    <property type="entry name" value="RapZ-like_N"/>
</dbReference>
<dbReference type="InterPro" id="IPR053931">
    <property type="entry name" value="RapZ_C"/>
</dbReference>
<dbReference type="NCBIfam" id="NF003828">
    <property type="entry name" value="PRK05416.1"/>
    <property type="match status" value="1"/>
</dbReference>
<dbReference type="PANTHER" id="PTHR30448">
    <property type="entry name" value="RNASE ADAPTER PROTEIN RAPZ"/>
    <property type="match status" value="1"/>
</dbReference>
<dbReference type="PANTHER" id="PTHR30448:SF0">
    <property type="entry name" value="RNASE ADAPTER PROTEIN RAPZ"/>
    <property type="match status" value="1"/>
</dbReference>
<dbReference type="Pfam" id="PF22740">
    <property type="entry name" value="PapZ_C"/>
    <property type="match status" value="1"/>
</dbReference>
<dbReference type="Pfam" id="PF03668">
    <property type="entry name" value="RapZ-like_N"/>
    <property type="match status" value="1"/>
</dbReference>
<dbReference type="PIRSF" id="PIRSF005052">
    <property type="entry name" value="P-loopkin"/>
    <property type="match status" value="1"/>
</dbReference>
<dbReference type="SUPFAM" id="SSF52540">
    <property type="entry name" value="P-loop containing nucleoside triphosphate hydrolases"/>
    <property type="match status" value="1"/>
</dbReference>
<comment type="function">
    <text evidence="1">Displays ATPase and GTPase activities.</text>
</comment>
<comment type="similarity">
    <text evidence="1">Belongs to the RapZ-like family.</text>
</comment>
<reference key="1">
    <citation type="journal article" date="2009" name="Proc. Natl. Acad. Sci. U.S.A.">
        <title>Characterizing a model human gut microbiota composed of members of its two dominant bacterial phyla.</title>
        <authorList>
            <person name="Mahowald M.A."/>
            <person name="Rey F.E."/>
            <person name="Seedorf H."/>
            <person name="Turnbaugh P.J."/>
            <person name="Fulton R.S."/>
            <person name="Wollam A."/>
            <person name="Shah N."/>
            <person name="Wang C."/>
            <person name="Magrini V."/>
            <person name="Wilson R.K."/>
            <person name="Cantarel B.L."/>
            <person name="Coutinho P.M."/>
            <person name="Henrissat B."/>
            <person name="Crock L.W."/>
            <person name="Russell A."/>
            <person name="Verberkmoes N.C."/>
            <person name="Hettich R.L."/>
            <person name="Gordon J.I."/>
        </authorList>
    </citation>
    <scope>NUCLEOTIDE SEQUENCE [LARGE SCALE GENOMIC DNA]</scope>
    <source>
        <strain>ATCC 33656 / DSM 3377 / JCM 17463 / KCTC 5835 / LMG 30912 / VPI 0990</strain>
    </source>
</reference>
<gene>
    <name type="ordered locus">EUBREC_0697</name>
</gene>